<comment type="function">
    <text evidence="1">Protein S19 forms a complex with S13 that binds strongly to the 16S ribosomal RNA.</text>
</comment>
<comment type="similarity">
    <text evidence="1">Belongs to the universal ribosomal protein uS19 family.</text>
</comment>
<comment type="sequence caution" evidence="2">
    <conflict type="erroneous initiation">
        <sequence resource="EMBL-CDS" id="ACG61443"/>
    </conflict>
</comment>
<protein>
    <recommendedName>
        <fullName evidence="1">Small ribosomal subunit protein uS19</fullName>
    </recommendedName>
    <alternativeName>
        <fullName evidence="2">30S ribosomal protein S19</fullName>
    </alternativeName>
</protein>
<organism>
    <name type="scientific">Streptococcus equi subsp. zooepidemicus (strain MGCS10565)</name>
    <dbReference type="NCBI Taxonomy" id="552526"/>
    <lineage>
        <taxon>Bacteria</taxon>
        <taxon>Bacillati</taxon>
        <taxon>Bacillota</taxon>
        <taxon>Bacilli</taxon>
        <taxon>Lactobacillales</taxon>
        <taxon>Streptococcaceae</taxon>
        <taxon>Streptococcus</taxon>
    </lineage>
</organism>
<accession>B4U504</accession>
<keyword id="KW-0687">Ribonucleoprotein</keyword>
<keyword id="KW-0689">Ribosomal protein</keyword>
<keyword id="KW-0694">RNA-binding</keyword>
<keyword id="KW-0699">rRNA-binding</keyword>
<name>RS19_STREM</name>
<reference key="1">
    <citation type="journal article" date="2008" name="PLoS ONE">
        <title>Genome sequence of a lancefield group C Streptococcus zooepidemicus strain causing epidemic nephritis: new information about an old disease.</title>
        <authorList>
            <person name="Beres S.B."/>
            <person name="Sesso R."/>
            <person name="Pinto S.W.L."/>
            <person name="Hoe N.P."/>
            <person name="Porcella S.F."/>
            <person name="Deleo F.R."/>
            <person name="Musser J.M."/>
        </authorList>
    </citation>
    <scope>NUCLEOTIDE SEQUENCE [LARGE SCALE GENOMIC DNA]</scope>
    <source>
        <strain>MGCS10565</strain>
    </source>
</reference>
<gene>
    <name evidence="1" type="primary">rpsS</name>
    <name type="ordered locus">Sez_0060</name>
</gene>
<proteinExistence type="inferred from homology"/>
<feature type="chain" id="PRO_0000354301" description="Small ribosomal subunit protein uS19">
    <location>
        <begin position="1"/>
        <end position="92"/>
    </location>
</feature>
<dbReference type="EMBL" id="CP001129">
    <property type="protein sequence ID" value="ACG61443.1"/>
    <property type="status" value="ALT_INIT"/>
    <property type="molecule type" value="Genomic_DNA"/>
</dbReference>
<dbReference type="RefSeq" id="WP_000533765.1">
    <property type="nucleotide sequence ID" value="NC_011134.1"/>
</dbReference>
<dbReference type="SMR" id="B4U504"/>
<dbReference type="GeneID" id="98392396"/>
<dbReference type="KEGG" id="sez:Sez_0060"/>
<dbReference type="HOGENOM" id="CLU_144911_0_0_9"/>
<dbReference type="Proteomes" id="UP000001873">
    <property type="component" value="Chromosome"/>
</dbReference>
<dbReference type="GO" id="GO:0005737">
    <property type="term" value="C:cytoplasm"/>
    <property type="evidence" value="ECO:0007669"/>
    <property type="project" value="UniProtKB-ARBA"/>
</dbReference>
<dbReference type="GO" id="GO:0015935">
    <property type="term" value="C:small ribosomal subunit"/>
    <property type="evidence" value="ECO:0007669"/>
    <property type="project" value="InterPro"/>
</dbReference>
<dbReference type="GO" id="GO:0019843">
    <property type="term" value="F:rRNA binding"/>
    <property type="evidence" value="ECO:0007669"/>
    <property type="project" value="UniProtKB-UniRule"/>
</dbReference>
<dbReference type="GO" id="GO:0003735">
    <property type="term" value="F:structural constituent of ribosome"/>
    <property type="evidence" value="ECO:0007669"/>
    <property type="project" value="InterPro"/>
</dbReference>
<dbReference type="GO" id="GO:0000028">
    <property type="term" value="P:ribosomal small subunit assembly"/>
    <property type="evidence" value="ECO:0007669"/>
    <property type="project" value="TreeGrafter"/>
</dbReference>
<dbReference type="GO" id="GO:0006412">
    <property type="term" value="P:translation"/>
    <property type="evidence" value="ECO:0007669"/>
    <property type="project" value="UniProtKB-UniRule"/>
</dbReference>
<dbReference type="FunFam" id="3.30.860.10:FF:000001">
    <property type="entry name" value="30S ribosomal protein S19"/>
    <property type="match status" value="1"/>
</dbReference>
<dbReference type="Gene3D" id="3.30.860.10">
    <property type="entry name" value="30s Ribosomal Protein S19, Chain A"/>
    <property type="match status" value="1"/>
</dbReference>
<dbReference type="HAMAP" id="MF_00531">
    <property type="entry name" value="Ribosomal_uS19"/>
    <property type="match status" value="1"/>
</dbReference>
<dbReference type="InterPro" id="IPR002222">
    <property type="entry name" value="Ribosomal_uS19"/>
</dbReference>
<dbReference type="InterPro" id="IPR005732">
    <property type="entry name" value="Ribosomal_uS19_bac-type"/>
</dbReference>
<dbReference type="InterPro" id="IPR020934">
    <property type="entry name" value="Ribosomal_uS19_CS"/>
</dbReference>
<dbReference type="InterPro" id="IPR023575">
    <property type="entry name" value="Ribosomal_uS19_SF"/>
</dbReference>
<dbReference type="NCBIfam" id="TIGR01050">
    <property type="entry name" value="rpsS_bact"/>
    <property type="match status" value="1"/>
</dbReference>
<dbReference type="PANTHER" id="PTHR11880">
    <property type="entry name" value="RIBOSOMAL PROTEIN S19P FAMILY MEMBER"/>
    <property type="match status" value="1"/>
</dbReference>
<dbReference type="PANTHER" id="PTHR11880:SF8">
    <property type="entry name" value="SMALL RIBOSOMAL SUBUNIT PROTEIN US19M"/>
    <property type="match status" value="1"/>
</dbReference>
<dbReference type="Pfam" id="PF00203">
    <property type="entry name" value="Ribosomal_S19"/>
    <property type="match status" value="1"/>
</dbReference>
<dbReference type="PIRSF" id="PIRSF002144">
    <property type="entry name" value="Ribosomal_S19"/>
    <property type="match status" value="1"/>
</dbReference>
<dbReference type="PRINTS" id="PR00975">
    <property type="entry name" value="RIBOSOMALS19"/>
</dbReference>
<dbReference type="SUPFAM" id="SSF54570">
    <property type="entry name" value="Ribosomal protein S19"/>
    <property type="match status" value="1"/>
</dbReference>
<dbReference type="PROSITE" id="PS00323">
    <property type="entry name" value="RIBOSOMAL_S19"/>
    <property type="match status" value="1"/>
</dbReference>
<evidence type="ECO:0000255" key="1">
    <source>
        <dbReference type="HAMAP-Rule" id="MF_00531"/>
    </source>
</evidence>
<evidence type="ECO:0000305" key="2"/>
<sequence length="92" mass="10622">MGRSLKKGPFVDEHLMKKVEAQANDEKKKVIKTWSRRSTIFPSFIGYTIAVYDGRKHVPVYIQEDMVGHKLGEFAPTRTYKGHAADDKKTRR</sequence>